<keyword id="KW-0965">Cell junction</keyword>
<keyword id="KW-1003">Cell membrane</keyword>
<keyword id="KW-1015">Disulfide bond</keyword>
<keyword id="KW-0967">Endosome</keyword>
<keyword id="KW-0297">G-protein coupled receptor</keyword>
<keyword id="KW-0325">Glycoprotein</keyword>
<keyword id="KW-1017">Isopeptide bond</keyword>
<keyword id="KW-0458">Lysosome</keyword>
<keyword id="KW-0472">Membrane</keyword>
<keyword id="KW-0597">Phosphoprotein</keyword>
<keyword id="KW-0654">Proteoglycan</keyword>
<keyword id="KW-0675">Receptor</keyword>
<keyword id="KW-1185">Reference proteome</keyword>
<keyword id="KW-0765">Sulfation</keyword>
<keyword id="KW-0807">Transducer</keyword>
<keyword id="KW-0812">Transmembrane</keyword>
<keyword id="KW-1133">Transmembrane helix</keyword>
<keyword id="KW-0832">Ubl conjugation</keyword>
<dbReference type="EMBL" id="U89798">
    <property type="protein sequence ID" value="AAC03718.1"/>
    <property type="molecule type" value="mRNA"/>
</dbReference>
<dbReference type="RefSeq" id="NP_001009047.1">
    <property type="nucleotide sequence ID" value="NM_001009047.1"/>
</dbReference>
<dbReference type="BMRB" id="P61072"/>
<dbReference type="SMR" id="P61072"/>
<dbReference type="FunCoup" id="P61072">
    <property type="interactions" value="1556"/>
</dbReference>
<dbReference type="STRING" id="9598.ENSPTRP00000074646"/>
<dbReference type="GlyCosmos" id="P61072">
    <property type="glycosylation" value="2 sites, No reported glycans"/>
</dbReference>
<dbReference type="PaxDb" id="9598-ENSPTRP00000021386"/>
<dbReference type="Ensembl" id="ENSPTRT00000099018.1">
    <property type="protein sequence ID" value="ENSPTRP00000069173.1"/>
    <property type="gene ID" value="ENSPTRG00000012501.3"/>
</dbReference>
<dbReference type="GeneID" id="450130"/>
<dbReference type="KEGG" id="ptr:450130"/>
<dbReference type="CTD" id="7852"/>
<dbReference type="VGNC" id="VGNC:156">
    <property type="gene designation" value="CXCR4"/>
</dbReference>
<dbReference type="eggNOG" id="KOG3656">
    <property type="taxonomic scope" value="Eukaryota"/>
</dbReference>
<dbReference type="GeneTree" id="ENSGT01050000244848"/>
<dbReference type="HOGENOM" id="CLU_009579_8_3_1"/>
<dbReference type="InParanoid" id="P61072"/>
<dbReference type="OMA" id="YVCQRFY"/>
<dbReference type="OrthoDB" id="4957at9604"/>
<dbReference type="TreeFam" id="TF330966"/>
<dbReference type="Proteomes" id="UP000002277">
    <property type="component" value="Chromosome 2B"/>
</dbReference>
<dbReference type="Bgee" id="ENSPTRG00000012501">
    <property type="expression patterns" value="Expressed in thymus and 18 other cell types or tissues"/>
</dbReference>
<dbReference type="GO" id="GO:0070161">
    <property type="term" value="C:anchoring junction"/>
    <property type="evidence" value="ECO:0007669"/>
    <property type="project" value="UniProtKB-SubCell"/>
</dbReference>
<dbReference type="GO" id="GO:0005769">
    <property type="term" value="C:early endosome"/>
    <property type="evidence" value="ECO:0000250"/>
    <property type="project" value="UniProtKB"/>
</dbReference>
<dbReference type="GO" id="GO:0009897">
    <property type="term" value="C:external side of plasma membrane"/>
    <property type="evidence" value="ECO:0000318"/>
    <property type="project" value="GO_Central"/>
</dbReference>
<dbReference type="GO" id="GO:0005770">
    <property type="term" value="C:late endosome"/>
    <property type="evidence" value="ECO:0000250"/>
    <property type="project" value="UniProtKB"/>
</dbReference>
<dbReference type="GO" id="GO:0005764">
    <property type="term" value="C:lysosome"/>
    <property type="evidence" value="ECO:0000250"/>
    <property type="project" value="UniProtKB"/>
</dbReference>
<dbReference type="GO" id="GO:0005886">
    <property type="term" value="C:plasma membrane"/>
    <property type="evidence" value="ECO:0000250"/>
    <property type="project" value="UniProtKB"/>
</dbReference>
<dbReference type="GO" id="GO:0019957">
    <property type="term" value="F:C-C chemokine binding"/>
    <property type="evidence" value="ECO:0000318"/>
    <property type="project" value="GO_Central"/>
</dbReference>
<dbReference type="GO" id="GO:0016493">
    <property type="term" value="F:C-C chemokine receptor activity"/>
    <property type="evidence" value="ECO:0000318"/>
    <property type="project" value="GO_Central"/>
</dbReference>
<dbReference type="GO" id="GO:0038147">
    <property type="term" value="F:C-X-C motif chemokine 12 receptor activity"/>
    <property type="evidence" value="ECO:0000250"/>
    <property type="project" value="UniProtKB"/>
</dbReference>
<dbReference type="GO" id="GO:0007420">
    <property type="term" value="P:brain development"/>
    <property type="evidence" value="ECO:0000318"/>
    <property type="project" value="GO_Central"/>
</dbReference>
<dbReference type="GO" id="GO:0019722">
    <property type="term" value="P:calcium-mediated signaling"/>
    <property type="evidence" value="ECO:0000318"/>
    <property type="project" value="GO_Central"/>
</dbReference>
<dbReference type="GO" id="GO:0060326">
    <property type="term" value="P:cell chemotaxis"/>
    <property type="evidence" value="ECO:0000318"/>
    <property type="project" value="GO_Central"/>
</dbReference>
<dbReference type="GO" id="GO:0071345">
    <property type="term" value="P:cellular response to cytokine stimulus"/>
    <property type="evidence" value="ECO:0000250"/>
    <property type="project" value="UniProtKB"/>
</dbReference>
<dbReference type="GO" id="GO:0038160">
    <property type="term" value="P:CXCL12-activated CXCR4 signaling pathway"/>
    <property type="evidence" value="ECO:0000250"/>
    <property type="project" value="UniProtKB"/>
</dbReference>
<dbReference type="GO" id="GO:0006955">
    <property type="term" value="P:immune response"/>
    <property type="evidence" value="ECO:0000318"/>
    <property type="project" value="GO_Central"/>
</dbReference>
<dbReference type="GO" id="GO:0022008">
    <property type="term" value="P:neurogenesis"/>
    <property type="evidence" value="ECO:0000318"/>
    <property type="project" value="GO_Central"/>
</dbReference>
<dbReference type="GO" id="GO:0007204">
    <property type="term" value="P:positive regulation of cytosolic calcium ion concentration"/>
    <property type="evidence" value="ECO:0000318"/>
    <property type="project" value="GO_Central"/>
</dbReference>
<dbReference type="CDD" id="cd15179">
    <property type="entry name" value="7tmA_CXCR4"/>
    <property type="match status" value="1"/>
</dbReference>
<dbReference type="FunFam" id="1.20.1070.10:FF:000063">
    <property type="entry name" value="C-X-C chemokine receptor type 4"/>
    <property type="match status" value="1"/>
</dbReference>
<dbReference type="Gene3D" id="1.20.1070.10">
    <property type="entry name" value="Rhodopsin 7-helix transmembrane proteins"/>
    <property type="match status" value="1"/>
</dbReference>
<dbReference type="InterPro" id="IPR050119">
    <property type="entry name" value="CCR1-9-like"/>
</dbReference>
<dbReference type="InterPro" id="IPR022726">
    <property type="entry name" value="Chemokine_CXCR4_N_dom"/>
</dbReference>
<dbReference type="InterPro" id="IPR000355">
    <property type="entry name" value="Chemokine_rcpt"/>
</dbReference>
<dbReference type="InterPro" id="IPR001277">
    <property type="entry name" value="CXCR4/ACKR2"/>
</dbReference>
<dbReference type="InterPro" id="IPR000276">
    <property type="entry name" value="GPCR_Rhodpsn"/>
</dbReference>
<dbReference type="InterPro" id="IPR017452">
    <property type="entry name" value="GPCR_Rhodpsn_7TM"/>
</dbReference>
<dbReference type="PANTHER" id="PTHR10489:SF594">
    <property type="entry name" value="C-X-C CHEMOKINE RECEPTOR TYPE 4"/>
    <property type="match status" value="1"/>
</dbReference>
<dbReference type="PANTHER" id="PTHR10489">
    <property type="entry name" value="CELL ADHESION MOLECULE"/>
    <property type="match status" value="1"/>
</dbReference>
<dbReference type="Pfam" id="PF00001">
    <property type="entry name" value="7tm_1"/>
    <property type="match status" value="1"/>
</dbReference>
<dbReference type="Pfam" id="PF12109">
    <property type="entry name" value="CXCR4_N"/>
    <property type="match status" value="1"/>
</dbReference>
<dbReference type="PRINTS" id="PR00657">
    <property type="entry name" value="CCCHEMOKINER"/>
</dbReference>
<dbReference type="PRINTS" id="PR00645">
    <property type="entry name" value="CXCCHMKINER4"/>
</dbReference>
<dbReference type="PRINTS" id="PR00237">
    <property type="entry name" value="GPCRRHODOPSN"/>
</dbReference>
<dbReference type="SUPFAM" id="SSF81321">
    <property type="entry name" value="Family A G protein-coupled receptor-like"/>
    <property type="match status" value="1"/>
</dbReference>
<dbReference type="PROSITE" id="PS00237">
    <property type="entry name" value="G_PROTEIN_RECEP_F1_1"/>
    <property type="match status" value="1"/>
</dbReference>
<dbReference type="PROSITE" id="PS50262">
    <property type="entry name" value="G_PROTEIN_RECEP_F1_2"/>
    <property type="match status" value="1"/>
</dbReference>
<protein>
    <recommendedName>
        <fullName>C-X-C chemokine receptor type 4</fullName>
        <shortName>CXC-R4</shortName>
        <shortName>CXCR-4</shortName>
    </recommendedName>
    <alternativeName>
        <fullName>Fusin</fullName>
    </alternativeName>
    <alternativeName>
        <fullName>Stromal cell-derived factor 1 receptor</fullName>
        <shortName>SDF-1 receptor</shortName>
    </alternativeName>
    <cdAntigenName>CD184</cdAntigenName>
</protein>
<comment type="function">
    <text evidence="2 3">Receptor for the C-X-C chemokine CXCL12/SDF-1 that transduces a signal by increasing intracellular calcium ion levels and enhancing MAPK1/MAPK3 activation. Involved in the AKT signaling cascade (By similarity). Plays a role in regulation of cell migration, e.g. during wound healing. Acts as a receptor for extracellular ubiquitin; leading to enhanced intracellular calcium ions and reduced cellular cAMP levels. Binds bacterial lipopolysaccharide (LPS) et mediates LPS-induced inflammatory response, including TNF secretion by monocytes (By similarity). Involved in hematopoiesis and in cardiac ventricular septum formation. Also plays an essential role in vascularization of the gastrointestinal tract, probably by regulating vascular branching and/or remodeling processes in endothelial cells. Involved in cerebellar development. In the CNS, could mediate hippocampal-neuron survival (By similarity).</text>
</comment>
<comment type="subunit">
    <text evidence="2">Monomer. Can form homodimers. Interacts with CD164. Interacts with ARRB2; the interaction is dependent on the C-terminal phosphorylation of CXCR4 and allows activation of MAPK1 and MAPK3. Interacts with ARR3; the interaction is dependent on the C-terminal phosphorylation of CXCR4 and modulates calcium mobilization. Interacts with RNF113A; the interaction, enhanced by CXCL12, promotes CXCR4 ubiquitination and subsequent degradation. Interacts (via the cytoplasmic C-terminal) with ITCH (via the WW domains I and II); the interaction, enhanced by CXCL12, promotes CXCR4 ubiquitination and leads to its degradation. Interacts with extracellular ubiquitin. Interacts with DBN1; this interaction is enhanced by antigenic stimulation. Following LPS binding, may form a complex with GDF5, HSP90AA1 and HSPA8.</text>
</comment>
<comment type="subcellular location">
    <subcellularLocation>
        <location evidence="2">Cell membrane</location>
        <topology evidence="2">Multi-pass membrane protein</topology>
    </subcellularLocation>
    <subcellularLocation>
        <location evidence="1">Cell junction</location>
    </subcellularLocation>
    <subcellularLocation>
        <location evidence="1">Early endosome</location>
    </subcellularLocation>
    <subcellularLocation>
        <location evidence="1">Late endosome</location>
    </subcellularLocation>
    <subcellularLocation>
        <location evidence="1">Lysosome</location>
    </subcellularLocation>
    <text evidence="1">In unstimulated cells, diffuse pattern on plasma membrane. On agonist stimulation, colocalizes with ITCH at the plasma membrane where it becomes ubiquitinated (By similarity). In the presence of antigen, distributes to the immunological synapse forming at the T-cell-APC contact area, where it localizes at the peripheral and distal supramolecular activation cluster (SMAC) (By similarity).</text>
</comment>
<comment type="PTM">
    <text evidence="2">Phosphorylated on agonist stimulation. Rapidly phosphorylated on serine and threonine residues in the C-terminal. Phosphorylation at Ser-324 and Ser-325 leads to recruitment of ITCH, ubiquitination and protein degradation.</text>
</comment>
<comment type="PTM">
    <text evidence="2">Ubiquitinated after ligand binding, leading to its degradation. Ubiquitinated by ITCH at the cell membrane on agonist stimulation. The ubiquitin-dependent mechanism, endosomal sorting complex required for transport (ESCRT), then targets CXCR4 for lysosomal degradation. This process is dependent also on prior Ser-/Thr-phosphorylation in the C-terminal of CXCR4. Also binding of ARRB1 to STAM negatively regulates CXCR4 sorting to lysosomes though modulating ubiquitination of SFR5S.</text>
</comment>
<comment type="PTM">
    <text evidence="2">Sulfation is required for efficient binding of CXCL12/SDF-1alpha and promotes its dimerization.</text>
</comment>
<comment type="PTM">
    <text evidence="2">O- and N-glycosylated. N-glycosylation can mask coreceptor function. The O-glycosylation chondroitin sulfate attachment does not affect interaction with CXCL12/SDF-1alpha nor its coreceptor activity.</text>
</comment>
<comment type="similarity">
    <text evidence="4">Belongs to the G-protein coupled receptor 1 family.</text>
</comment>
<sequence>MEGISIYTSDNYTEEMGSGDYDSMKEPCFREENANFNKIFLPTIYSIIFLTGIVGNGLVILVMGYQKKLRSMTDKYRLHLSVADLLFVITLPFWAVDAVANWYFGNFLCKAVHVIYTVNLYSSVLILAFISLDRYLAIVHATNSQRPRKLLAEKVVYVGVWIPALLLTIPDFIFANVSEADDRYICDRFYPNDLWVVVFQFQHIMVGLILPGIVILSCYCIIISKLSHSKGHQKRKALKTTVILILAFFACWLPYYIGISIDSFILLEIIKQGCEFENTVHKWISITEALAFFHCCLNPILYAFLGAKFKTSAQHALTSVSRGSSLKILSKGKRGGHSSVSTESESSSFHSS</sequence>
<name>CXCR4_PANTR</name>
<organism>
    <name type="scientific">Pan troglodytes</name>
    <name type="common">Chimpanzee</name>
    <dbReference type="NCBI Taxonomy" id="9598"/>
    <lineage>
        <taxon>Eukaryota</taxon>
        <taxon>Metazoa</taxon>
        <taxon>Chordata</taxon>
        <taxon>Craniata</taxon>
        <taxon>Vertebrata</taxon>
        <taxon>Euteleostomi</taxon>
        <taxon>Mammalia</taxon>
        <taxon>Eutheria</taxon>
        <taxon>Euarchontoglires</taxon>
        <taxon>Primates</taxon>
        <taxon>Haplorrhini</taxon>
        <taxon>Catarrhini</taxon>
        <taxon>Hominidae</taxon>
        <taxon>Pan</taxon>
    </lineage>
</organism>
<proteinExistence type="evidence at transcript level"/>
<accession>P61072</accession>
<accession>O60835</accession>
<accession>P30991</accession>
<accession>P56438</accession>
<accession>Q9UKN2</accession>
<feature type="chain" id="PRO_0000069356" description="C-X-C chemokine receptor type 4">
    <location>
        <begin position="1"/>
        <end position="352"/>
    </location>
</feature>
<feature type="topological domain" description="Extracellular" evidence="6">
    <location>
        <begin position="1"/>
        <end position="38"/>
    </location>
</feature>
<feature type="transmembrane region" description="Helical; Name=1" evidence="2">
    <location>
        <begin position="39"/>
        <end position="63"/>
    </location>
</feature>
<feature type="topological domain" description="Cytoplasmic" evidence="6">
    <location>
        <begin position="64"/>
        <end position="77"/>
    </location>
</feature>
<feature type="transmembrane region" description="Helical; Name=2" evidence="2">
    <location>
        <begin position="78"/>
        <end position="99"/>
    </location>
</feature>
<feature type="topological domain" description="Extracellular" evidence="6">
    <location>
        <begin position="100"/>
        <end position="110"/>
    </location>
</feature>
<feature type="transmembrane region" description="Helical; Name=3" evidence="2">
    <location>
        <begin position="111"/>
        <end position="130"/>
    </location>
</feature>
<feature type="topological domain" description="Cytoplasmic" evidence="6">
    <location>
        <begin position="131"/>
        <end position="154"/>
    </location>
</feature>
<feature type="transmembrane region" description="Helical; Name=4" evidence="2">
    <location>
        <begin position="155"/>
        <end position="174"/>
    </location>
</feature>
<feature type="topological domain" description="Extracellular" evidence="6">
    <location>
        <begin position="175"/>
        <end position="195"/>
    </location>
</feature>
<feature type="transmembrane region" description="Helical; Name=5" evidence="2">
    <location>
        <begin position="196"/>
        <end position="216"/>
    </location>
</feature>
<feature type="topological domain" description="Cytoplasmic" evidence="6">
    <location>
        <begin position="217"/>
        <end position="241"/>
    </location>
</feature>
<feature type="transmembrane region" description="Helical; Name=6" evidence="2">
    <location>
        <begin position="242"/>
        <end position="261"/>
    </location>
</feature>
<feature type="topological domain" description="Extracellular" evidence="6">
    <location>
        <begin position="262"/>
        <end position="282"/>
    </location>
</feature>
<feature type="transmembrane region" description="Helical; Name=7" evidence="2">
    <location>
        <begin position="283"/>
        <end position="302"/>
    </location>
</feature>
<feature type="topological domain" description="Cytoplasmic" evidence="6">
    <location>
        <begin position="303"/>
        <end position="352"/>
    </location>
</feature>
<feature type="region of interest" description="Important for chemokine binding and signaling" evidence="1">
    <location>
        <begin position="1"/>
        <end position="21"/>
    </location>
</feature>
<feature type="region of interest" description="Chemokine binding" evidence="1">
    <location>
        <begin position="94"/>
        <end position="97"/>
    </location>
</feature>
<feature type="region of interest" description="Chemokine binding" evidence="1">
    <location>
        <begin position="113"/>
        <end position="117"/>
    </location>
</feature>
<feature type="region of interest" description="Involved in dimerization; when bound to chemokine" evidence="1">
    <location>
        <begin position="135"/>
        <end position="147"/>
    </location>
</feature>
<feature type="region of interest" description="Chemokine binding, important for signaling" evidence="1">
    <location>
        <begin position="186"/>
        <end position="190"/>
    </location>
</feature>
<feature type="region of interest" description="Involved in dimerization" evidence="1">
    <location>
        <begin position="191"/>
        <end position="210"/>
    </location>
</feature>
<feature type="region of interest" description="Involved in dimerization" evidence="1">
    <location>
        <begin position="266"/>
        <end position="268"/>
    </location>
</feature>
<feature type="region of interest" description="Disordered" evidence="5">
    <location>
        <begin position="329"/>
        <end position="352"/>
    </location>
</feature>
<feature type="short sequence motif" description="Important for signaling" evidence="1">
    <location>
        <begin position="133"/>
        <end position="135"/>
    </location>
</feature>
<feature type="compositionally biased region" description="Low complexity" evidence="5">
    <location>
        <begin position="337"/>
        <end position="352"/>
    </location>
</feature>
<feature type="site" description="Chemokine" evidence="1">
    <location>
        <position position="171"/>
    </location>
</feature>
<feature type="site" description="Chemokine" evidence="1">
    <location>
        <position position="288"/>
    </location>
</feature>
<feature type="modified residue" description="Sulfotyrosine" evidence="2">
    <location>
        <position position="7"/>
    </location>
</feature>
<feature type="modified residue" description="Sulfotyrosine" evidence="2">
    <location>
        <position position="12"/>
    </location>
</feature>
<feature type="modified residue" description="Sulfotyrosine" evidence="2">
    <location>
        <position position="21"/>
    </location>
</feature>
<feature type="modified residue" description="Phosphoserine" evidence="2">
    <location>
        <position position="319"/>
    </location>
</feature>
<feature type="modified residue" description="Phosphoserine" evidence="2">
    <location>
        <position position="321"/>
    </location>
</feature>
<feature type="modified residue" description="Phosphoserine; by PKC and GRK6" evidence="2">
    <location>
        <position position="324"/>
    </location>
</feature>
<feature type="modified residue" description="Phosphoserine; by PKC and GRK6" evidence="2">
    <location>
        <position position="325"/>
    </location>
</feature>
<feature type="modified residue" description="Phosphoserine; by GRK6" evidence="2">
    <location>
        <position position="330"/>
    </location>
</feature>
<feature type="modified residue" description="Phosphoserine; by GRK6" evidence="2">
    <location>
        <position position="339"/>
    </location>
</feature>
<feature type="modified residue" description="Phosphoserine" evidence="2">
    <location>
        <position position="348"/>
    </location>
</feature>
<feature type="modified residue" description="Phosphoserine" evidence="2">
    <location>
        <position position="351"/>
    </location>
</feature>
<feature type="glycosylation site" description="N-linked (GlcNAc...) asparagine" evidence="1">
    <location>
        <position position="11"/>
    </location>
</feature>
<feature type="glycosylation site" description="O-linked (Xyl...) (chondroitin sulfate) serine" evidence="2">
    <location>
        <position position="18"/>
    </location>
</feature>
<feature type="disulfide bond" evidence="4">
    <location>
        <begin position="28"/>
        <end position="274"/>
    </location>
</feature>
<feature type="disulfide bond" evidence="4">
    <location>
        <begin position="109"/>
        <end position="186"/>
    </location>
</feature>
<feature type="cross-link" description="Glycyl lysine isopeptide (Lys-Gly) (interchain with G-Cter in ubiquitin)" evidence="2">
    <location>
        <position position="331"/>
    </location>
</feature>
<reference key="1">
    <citation type="journal article" date="1997" name="AIDS Res. Hum. Retroviruses">
        <title>Chimpanzee CXCR4 and CCR5 act as coreceptors for HIV type 1.</title>
        <authorList>
            <person name="Pretet J.-L."/>
            <person name="Zerbib A.C."/>
            <person name="Girard M."/>
            <person name="Guillet J.-G."/>
            <person name="Butor C."/>
        </authorList>
    </citation>
    <scope>NUCLEOTIDE SEQUENCE [MRNA]</scope>
</reference>
<evidence type="ECO:0000250" key="1"/>
<evidence type="ECO:0000250" key="2">
    <source>
        <dbReference type="UniProtKB" id="P61073"/>
    </source>
</evidence>
<evidence type="ECO:0000250" key="3">
    <source>
        <dbReference type="UniProtKB" id="P70658"/>
    </source>
</evidence>
<evidence type="ECO:0000255" key="4">
    <source>
        <dbReference type="PROSITE-ProRule" id="PRU00521"/>
    </source>
</evidence>
<evidence type="ECO:0000256" key="5">
    <source>
        <dbReference type="SAM" id="MobiDB-lite"/>
    </source>
</evidence>
<evidence type="ECO:0000305" key="6"/>
<gene>
    <name type="primary">CXCR4</name>
</gene>